<name>ISPG_THETH</name>
<sequence length="406" mass="44217">MEGMRRPTPTVYVGRVPIGGAHPIAVQSMTNTPTRDVEATTAQVLELHRAGSEIVRLTVNDEEAAKAVPEIKRRLLAEGVEVPLVGDFHFNGHLLLRKYPKMAEALDKFRINPGTLGRGRHKDEHFAEMIRIAMDLGKPVRIGANWGSLDPALLTELMDRNASRPEPKSAHEVVLEALVESAVRAYEAALEMGLGEDKLVLSAKVSKARDLVWVYRELARRTQAPLHLGLTEAGMGVKGIVASAAALAPLLLEGIGDTIRVSLTPSPKEPRTKEVEVAQEILQALGLRAFAPEVTSCPGCGRTTSTFFQELAEEVSRRLKERLPEWRARYPGVEELKVAVMGCVVNGPGESKHAHIGISLPGAGEEPKAPVYADGKLLTILKGEGIAEEFLRLVEDYVKTRFAPKA</sequence>
<accession>Q84GJ3</accession>
<evidence type="ECO:0000255" key="1">
    <source>
        <dbReference type="HAMAP-Rule" id="MF_00159"/>
    </source>
</evidence>
<evidence type="ECO:0000269" key="2">
    <source>
    </source>
</evidence>
<evidence type="ECO:0007829" key="3">
    <source>
        <dbReference type="PDB" id="4S23"/>
    </source>
</evidence>
<feature type="chain" id="PRO_0000190643" description="4-hydroxy-3-methylbut-2-en-1-yl diphosphate synthase (flavodoxin)">
    <location>
        <begin position="1"/>
        <end position="406"/>
    </location>
</feature>
<feature type="binding site" evidence="1">
    <location>
        <position position="297"/>
    </location>
    <ligand>
        <name>[4Fe-4S] cluster</name>
        <dbReference type="ChEBI" id="CHEBI:49883"/>
    </ligand>
</feature>
<feature type="binding site" evidence="1">
    <location>
        <position position="300"/>
    </location>
    <ligand>
        <name>[4Fe-4S] cluster</name>
        <dbReference type="ChEBI" id="CHEBI:49883"/>
    </ligand>
</feature>
<feature type="binding site" evidence="1">
    <location>
        <position position="343"/>
    </location>
    <ligand>
        <name>[4Fe-4S] cluster</name>
        <dbReference type="ChEBI" id="CHEBI:49883"/>
    </ligand>
</feature>
<feature type="binding site" evidence="1">
    <location>
        <position position="350"/>
    </location>
    <ligand>
        <name>[4Fe-4S] cluster</name>
        <dbReference type="ChEBI" id="CHEBI:49883"/>
    </ligand>
</feature>
<feature type="strand" evidence="3">
    <location>
        <begin position="11"/>
        <end position="13"/>
    </location>
</feature>
<feature type="strand" evidence="3">
    <location>
        <begin position="16"/>
        <end position="19"/>
    </location>
</feature>
<feature type="strand" evidence="3">
    <location>
        <begin position="25"/>
        <end position="29"/>
    </location>
</feature>
<feature type="helix" evidence="3">
    <location>
        <begin position="37"/>
        <end position="50"/>
    </location>
</feature>
<feature type="strand" evidence="3">
    <location>
        <begin position="53"/>
        <end position="58"/>
    </location>
</feature>
<feature type="helix" evidence="3">
    <location>
        <begin position="62"/>
        <end position="76"/>
    </location>
</feature>
<feature type="turn" evidence="3">
    <location>
        <begin position="77"/>
        <end position="79"/>
    </location>
</feature>
<feature type="strand" evidence="3">
    <location>
        <begin position="84"/>
        <end position="87"/>
    </location>
</feature>
<feature type="helix" evidence="3">
    <location>
        <begin position="92"/>
        <end position="98"/>
    </location>
</feature>
<feature type="helix" evidence="3">
    <location>
        <begin position="100"/>
        <end position="105"/>
    </location>
</feature>
<feature type="strand" evidence="3">
    <location>
        <begin position="107"/>
        <end position="111"/>
    </location>
</feature>
<feature type="strand" evidence="3">
    <location>
        <begin position="118"/>
        <end position="120"/>
    </location>
</feature>
<feature type="helix" evidence="3">
    <location>
        <begin position="121"/>
        <end position="136"/>
    </location>
</feature>
<feature type="strand" evidence="3">
    <location>
        <begin position="140"/>
        <end position="145"/>
    </location>
</feature>
<feature type="helix" evidence="3">
    <location>
        <begin position="146"/>
        <end position="148"/>
    </location>
</feature>
<feature type="helix" evidence="3">
    <location>
        <begin position="151"/>
        <end position="161"/>
    </location>
</feature>
<feature type="strand" evidence="3">
    <location>
        <begin position="164"/>
        <end position="166"/>
    </location>
</feature>
<feature type="helix" evidence="3">
    <location>
        <begin position="170"/>
        <end position="191"/>
    </location>
</feature>
<feature type="helix" evidence="3">
    <location>
        <begin position="196"/>
        <end position="198"/>
    </location>
</feature>
<feature type="strand" evidence="3">
    <location>
        <begin position="199"/>
        <end position="204"/>
    </location>
</feature>
<feature type="helix" evidence="3">
    <location>
        <begin position="208"/>
        <end position="221"/>
    </location>
</feature>
<feature type="strand" evidence="3">
    <location>
        <begin position="226"/>
        <end position="228"/>
    </location>
</feature>
<feature type="helix" evidence="3">
    <location>
        <begin position="236"/>
        <end position="252"/>
    </location>
</feature>
<feature type="strand" evidence="3">
    <location>
        <begin position="257"/>
        <end position="259"/>
    </location>
</feature>
<feature type="helix" evidence="3">
    <location>
        <begin position="273"/>
        <end position="284"/>
    </location>
</feature>
<feature type="strand" evidence="3">
    <location>
        <begin position="293"/>
        <end position="296"/>
    </location>
</feature>
<feature type="helix" evidence="3">
    <location>
        <begin position="305"/>
        <end position="329"/>
    </location>
</feature>
<feature type="helix" evidence="3">
    <location>
        <begin position="333"/>
        <end position="335"/>
    </location>
</feature>
<feature type="strand" evidence="3">
    <location>
        <begin position="337"/>
        <end position="343"/>
    </location>
</feature>
<feature type="turn" evidence="3">
    <location>
        <begin position="344"/>
        <end position="346"/>
    </location>
</feature>
<feature type="helix" evidence="3">
    <location>
        <begin position="347"/>
        <end position="351"/>
    </location>
</feature>
<feature type="strand" evidence="3">
    <location>
        <begin position="354"/>
        <end position="359"/>
    </location>
</feature>
<feature type="strand" evidence="3">
    <location>
        <begin position="367"/>
        <end position="373"/>
    </location>
</feature>
<feature type="strand" evidence="3">
    <location>
        <begin position="376"/>
        <end position="384"/>
    </location>
</feature>
<feature type="helix" evidence="3">
    <location>
        <begin position="386"/>
        <end position="401"/>
    </location>
</feature>
<dbReference type="EC" id="1.17.7.3" evidence="1 2"/>
<dbReference type="EMBL" id="AY167032">
    <property type="protein sequence ID" value="AAO21364.1"/>
    <property type="molecule type" value="Genomic_DNA"/>
</dbReference>
<dbReference type="RefSeq" id="WP_011174043.1">
    <property type="nucleotide sequence ID" value="NZ_CP053287.1"/>
</dbReference>
<dbReference type="PDB" id="4S23">
    <property type="method" value="X-ray"/>
    <property type="resolution" value="1.65 A"/>
    <property type="chains" value="A/B=1-406"/>
</dbReference>
<dbReference type="PDBsum" id="4S23"/>
<dbReference type="SMR" id="Q84GJ3"/>
<dbReference type="MINT" id="Q84GJ3"/>
<dbReference type="UniPathway" id="UPA00056">
    <property type="reaction ID" value="UER00096"/>
</dbReference>
<dbReference type="GO" id="GO:0051539">
    <property type="term" value="F:4 iron, 4 sulfur cluster binding"/>
    <property type="evidence" value="ECO:0007669"/>
    <property type="project" value="UniProtKB-UniRule"/>
</dbReference>
<dbReference type="GO" id="GO:0046429">
    <property type="term" value="F:4-hydroxy-3-methylbut-2-en-1-yl diphosphate synthase activity (ferredoxin)"/>
    <property type="evidence" value="ECO:0007669"/>
    <property type="project" value="UniProtKB-UniRule"/>
</dbReference>
<dbReference type="GO" id="GO:0141197">
    <property type="term" value="F:4-hydroxy-3-methylbut-2-enyl-diphosphate synthase activity (flavodoxin)"/>
    <property type="evidence" value="ECO:0007669"/>
    <property type="project" value="UniProtKB-EC"/>
</dbReference>
<dbReference type="GO" id="GO:0005506">
    <property type="term" value="F:iron ion binding"/>
    <property type="evidence" value="ECO:0007669"/>
    <property type="project" value="InterPro"/>
</dbReference>
<dbReference type="GO" id="GO:0019288">
    <property type="term" value="P:isopentenyl diphosphate biosynthetic process, methylerythritol 4-phosphate pathway"/>
    <property type="evidence" value="ECO:0007669"/>
    <property type="project" value="UniProtKB-UniRule"/>
</dbReference>
<dbReference type="GO" id="GO:0016114">
    <property type="term" value="P:terpenoid biosynthetic process"/>
    <property type="evidence" value="ECO:0007669"/>
    <property type="project" value="InterPro"/>
</dbReference>
<dbReference type="FunFam" id="3.30.413.10:FF:000012">
    <property type="entry name" value="4-hydroxy-3-methylbut-2-en-1-yl diphosphate synthase (flavodoxin)"/>
    <property type="match status" value="1"/>
</dbReference>
<dbReference type="Gene3D" id="3.20.20.20">
    <property type="entry name" value="Dihydropteroate synthase-like"/>
    <property type="match status" value="1"/>
</dbReference>
<dbReference type="Gene3D" id="3.30.413.10">
    <property type="entry name" value="Sulfite Reductase Hemoprotein, domain 1"/>
    <property type="match status" value="1"/>
</dbReference>
<dbReference type="HAMAP" id="MF_00159">
    <property type="entry name" value="IspG"/>
    <property type="match status" value="1"/>
</dbReference>
<dbReference type="InterPro" id="IPR011005">
    <property type="entry name" value="Dihydropteroate_synth-like_sf"/>
</dbReference>
<dbReference type="InterPro" id="IPR016425">
    <property type="entry name" value="IspG_bac"/>
</dbReference>
<dbReference type="InterPro" id="IPR004588">
    <property type="entry name" value="IspG_bac-typ"/>
</dbReference>
<dbReference type="InterPro" id="IPR045854">
    <property type="entry name" value="NO2/SO3_Rdtase_4Fe4S_sf"/>
</dbReference>
<dbReference type="NCBIfam" id="TIGR00612">
    <property type="entry name" value="ispG_gcpE"/>
    <property type="match status" value="1"/>
</dbReference>
<dbReference type="NCBIfam" id="NF001540">
    <property type="entry name" value="PRK00366.1"/>
    <property type="match status" value="1"/>
</dbReference>
<dbReference type="PANTHER" id="PTHR30454">
    <property type="entry name" value="4-HYDROXY-3-METHYLBUT-2-EN-1-YL DIPHOSPHATE SYNTHASE"/>
    <property type="match status" value="1"/>
</dbReference>
<dbReference type="PANTHER" id="PTHR30454:SF0">
    <property type="entry name" value="4-HYDROXY-3-METHYLBUT-2-EN-1-YL DIPHOSPHATE SYNTHASE (FERREDOXIN), CHLOROPLASTIC"/>
    <property type="match status" value="1"/>
</dbReference>
<dbReference type="Pfam" id="PF04551">
    <property type="entry name" value="GcpE"/>
    <property type="match status" value="1"/>
</dbReference>
<dbReference type="PIRSF" id="PIRSF004640">
    <property type="entry name" value="IspG"/>
    <property type="match status" value="1"/>
</dbReference>
<dbReference type="SUPFAM" id="SSF51717">
    <property type="entry name" value="Dihydropteroate synthetase-like"/>
    <property type="match status" value="1"/>
</dbReference>
<dbReference type="SUPFAM" id="SSF56014">
    <property type="entry name" value="Nitrite and sulphite reductase 4Fe-4S domain-like"/>
    <property type="match status" value="1"/>
</dbReference>
<reference key="1">
    <citation type="journal article" date="2002" name="FEBS Lett.">
        <title>Functional characterization of GcpE, an essential enzyme of the non-mevalonate pathway of isoprenoid biosynthesis.</title>
        <authorList>
            <person name="Kollas A.-K."/>
            <person name="Duin E.C."/>
            <person name="Eberl M."/>
            <person name="Altincicek B."/>
            <person name="Hintz M."/>
            <person name="Reichenberg A."/>
            <person name="Henschker D."/>
            <person name="Henne A."/>
            <person name="Steinbrecher I."/>
            <person name="Ostrovsky D.N."/>
            <person name="Hedderich R."/>
            <person name="Beck E."/>
            <person name="Jomaa H."/>
            <person name="Wiesner J."/>
        </authorList>
    </citation>
    <scope>NUCLEOTIDE SEQUENCE [GENOMIC DNA]</scope>
    <scope>CATALYTIC ACTIVITY</scope>
    <scope>IRON-SULFUR CLUSTER</scope>
</reference>
<proteinExistence type="evidence at protein level"/>
<organism>
    <name type="scientific">Thermus thermophilus</name>
    <dbReference type="NCBI Taxonomy" id="274"/>
    <lineage>
        <taxon>Bacteria</taxon>
        <taxon>Thermotogati</taxon>
        <taxon>Deinococcota</taxon>
        <taxon>Deinococci</taxon>
        <taxon>Thermales</taxon>
        <taxon>Thermaceae</taxon>
        <taxon>Thermus</taxon>
    </lineage>
</organism>
<comment type="function">
    <text evidence="1 2">Converts 2C-methyl-D-erythritol 2,4-cyclodiphosphate (ME-2,4cPP) into 1-hydroxy-2-methyl-2-(E)-butenyl 4-diphosphate.</text>
</comment>
<comment type="catalytic activity">
    <reaction evidence="1 2">
        <text>(2E)-4-hydroxy-3-methylbut-2-enyl diphosphate + oxidized [flavodoxin] + H2O + 2 H(+) = 2-C-methyl-D-erythritol 2,4-cyclic diphosphate + reduced [flavodoxin]</text>
        <dbReference type="Rhea" id="RHEA:43604"/>
        <dbReference type="Rhea" id="RHEA-COMP:10622"/>
        <dbReference type="Rhea" id="RHEA-COMP:10623"/>
        <dbReference type="ChEBI" id="CHEBI:15377"/>
        <dbReference type="ChEBI" id="CHEBI:15378"/>
        <dbReference type="ChEBI" id="CHEBI:57618"/>
        <dbReference type="ChEBI" id="CHEBI:58210"/>
        <dbReference type="ChEBI" id="CHEBI:58483"/>
        <dbReference type="ChEBI" id="CHEBI:128753"/>
        <dbReference type="EC" id="1.17.7.3"/>
    </reaction>
</comment>
<comment type="cofactor">
    <cofactor evidence="1 2">
        <name>[4Fe-4S] cluster</name>
        <dbReference type="ChEBI" id="CHEBI:49883"/>
    </cofactor>
    <text evidence="1 2">Binds 1 [4Fe-4S] cluster.</text>
</comment>
<comment type="biophysicochemical properties">
    <phDependence>
        <text>Optimum pH is 7.5.</text>
    </phDependence>
    <temperatureDependence>
        <text>Optimum temperature is 55 degrees Celsius.</text>
    </temperatureDependence>
</comment>
<comment type="pathway">
    <text evidence="1">Isoprenoid biosynthesis; isopentenyl diphosphate biosynthesis via DXP pathway; isopentenyl diphosphate from 1-deoxy-D-xylulose 5-phosphate: step 5/6.</text>
</comment>
<comment type="similarity">
    <text evidence="1">Belongs to the IspG family.</text>
</comment>
<gene>
    <name evidence="1" type="primary">ispG</name>
    <name type="synonym">gcpE</name>
</gene>
<keyword id="KW-0002">3D-structure</keyword>
<keyword id="KW-0004">4Fe-4S</keyword>
<keyword id="KW-0408">Iron</keyword>
<keyword id="KW-0411">Iron-sulfur</keyword>
<keyword id="KW-0414">Isoprene biosynthesis</keyword>
<keyword id="KW-0479">Metal-binding</keyword>
<keyword id="KW-0560">Oxidoreductase</keyword>
<protein>
    <recommendedName>
        <fullName evidence="1">4-hydroxy-3-methylbut-2-en-1-yl diphosphate synthase (flavodoxin)</fullName>
        <ecNumber evidence="1 2">1.17.7.3</ecNumber>
    </recommendedName>
    <alternativeName>
        <fullName evidence="1">1-hydroxy-2-methyl-2-(E)-butenyl 4-diphosphate synthase</fullName>
    </alternativeName>
</protein>